<comment type="function">
    <text>Electron acceptor for MDH. Acts in methanol oxidation.</text>
</comment>
<comment type="biophysicochemical properties">
    <redoxPotential>
        <text>E(0) is about +256 mV.</text>
    </redoxPotential>
</comment>
<comment type="subcellular location">
    <subcellularLocation>
        <location evidence="1">Periplasm</location>
    </subcellularLocation>
</comment>
<comment type="PTM">
    <text>Binds 1 heme c group covalently per subunit.</text>
</comment>
<proteinExistence type="evidence at protein level"/>
<sequence>MMNRVKIGTALLGLTLAGIALPALAQPQSGPQTGVVFRNTVTGEALDVSQGKEGGRDTPAVKKFLETGENLYIDDKSCLRNGESLFATSCSGCHGHLAEGKLGPGLNDNYWTYPSNTTDVGLFATIFGGANGMMGPHNENLTPDEMLQTIAWIRHLYTGPKQDAVWLNDEQKKAYTPYKQGEVIPKDAKGQCKPLDE</sequence>
<feature type="signal peptide">
    <location>
        <begin position="1"/>
        <end position="25"/>
    </location>
</feature>
<feature type="chain" id="PRO_0000006552" description="Cytochrome c-L">
    <location>
        <begin position="26"/>
        <end position="197"/>
    </location>
</feature>
<feature type="binding site" description="covalent">
    <location>
        <position position="90"/>
    </location>
    <ligand>
        <name>heme c</name>
        <dbReference type="ChEBI" id="CHEBI:61717"/>
    </ligand>
</feature>
<feature type="binding site" description="covalent">
    <location>
        <position position="93"/>
    </location>
    <ligand>
        <name>heme c</name>
        <dbReference type="ChEBI" id="CHEBI:61717"/>
    </ligand>
</feature>
<feature type="binding site" description="axial binding residue">
    <location>
        <position position="94"/>
    </location>
    <ligand>
        <name>heme c</name>
        <dbReference type="ChEBI" id="CHEBI:61717"/>
    </ligand>
    <ligandPart>
        <name>Fe</name>
        <dbReference type="ChEBI" id="CHEBI:18248"/>
    </ligandPart>
</feature>
<feature type="strand" evidence="2">
    <location>
        <begin position="55"/>
        <end position="58"/>
    </location>
</feature>
<feature type="helix" evidence="2">
    <location>
        <begin position="59"/>
        <end position="67"/>
    </location>
</feature>
<feature type="turn" evidence="2">
    <location>
        <begin position="71"/>
        <end position="74"/>
    </location>
</feature>
<feature type="helix" evidence="2">
    <location>
        <begin position="76"/>
        <end position="89"/>
    </location>
</feature>
<feature type="helix" evidence="2">
    <location>
        <begin position="91"/>
        <end position="94"/>
    </location>
</feature>
<feature type="strand" evidence="2">
    <location>
        <begin position="101"/>
        <end position="103"/>
    </location>
</feature>
<feature type="strand" evidence="2">
    <location>
        <begin position="106"/>
        <end position="109"/>
    </location>
</feature>
<feature type="helix" evidence="2">
    <location>
        <begin position="114"/>
        <end position="117"/>
    </location>
</feature>
<feature type="helix" evidence="2">
    <location>
        <begin position="119"/>
        <end position="127"/>
    </location>
</feature>
<feature type="strand" evidence="2">
    <location>
        <begin position="132"/>
        <end position="134"/>
    </location>
</feature>
<feature type="helix" evidence="2">
    <location>
        <begin position="143"/>
        <end position="155"/>
    </location>
</feature>
<feature type="helix" evidence="2">
    <location>
        <begin position="161"/>
        <end position="163"/>
    </location>
</feature>
<feature type="helix" evidence="2">
    <location>
        <begin position="169"/>
        <end position="174"/>
    </location>
</feature>
<feature type="strand" evidence="2">
    <location>
        <begin position="190"/>
        <end position="192"/>
    </location>
</feature>
<gene>
    <name type="primary">moxG</name>
    <name type="synonym">mxaG</name>
    <name type="ordered locus">MexAM1_META1p4536</name>
</gene>
<keyword id="KW-0002">3D-structure</keyword>
<keyword id="KW-0249">Electron transport</keyword>
<keyword id="KW-0349">Heme</keyword>
<keyword id="KW-0408">Iron</keyword>
<keyword id="KW-0479">Metal-binding</keyword>
<keyword id="KW-0485">Methanol utilization</keyword>
<keyword id="KW-0574">Periplasm</keyword>
<keyword id="KW-1185">Reference proteome</keyword>
<keyword id="KW-0732">Signal</keyword>
<keyword id="KW-0813">Transport</keyword>
<dbReference type="EMBL" id="X07856">
    <property type="protein sequence ID" value="CAA30704.1"/>
    <property type="molecule type" value="Genomic_DNA"/>
</dbReference>
<dbReference type="EMBL" id="CP001510">
    <property type="protein sequence ID" value="ACS42167.1"/>
    <property type="molecule type" value="Genomic_DNA"/>
</dbReference>
<dbReference type="EMBL" id="M31108">
    <property type="protein sequence ID" value="AAA25382.1"/>
    <property type="molecule type" value="Genomic_DNA"/>
</dbReference>
<dbReference type="RefSeq" id="WP_003599117.1">
    <property type="nucleotide sequence ID" value="NC_012808.1"/>
</dbReference>
<dbReference type="PDB" id="2C8S">
    <property type="method" value="X-ray"/>
    <property type="resolution" value="1.60 A"/>
    <property type="chains" value="A=26-197"/>
</dbReference>
<dbReference type="PDBsum" id="2C8S"/>
<dbReference type="SMR" id="P14774"/>
<dbReference type="STRING" id="272630.MexAM1_META1p4536"/>
<dbReference type="KEGG" id="mea:Mex_1p4536"/>
<dbReference type="eggNOG" id="COG2010">
    <property type="taxonomic scope" value="Bacteria"/>
</dbReference>
<dbReference type="HOGENOM" id="CLU_109361_0_0_5"/>
<dbReference type="OrthoDB" id="9779283at2"/>
<dbReference type="EvolutionaryTrace" id="P14774"/>
<dbReference type="Proteomes" id="UP000009081">
    <property type="component" value="Chromosome"/>
</dbReference>
<dbReference type="GO" id="GO:0042597">
    <property type="term" value="C:periplasmic space"/>
    <property type="evidence" value="ECO:0007669"/>
    <property type="project" value="UniProtKB-SubCell"/>
</dbReference>
<dbReference type="GO" id="GO:0009055">
    <property type="term" value="F:electron transfer activity"/>
    <property type="evidence" value="ECO:0007669"/>
    <property type="project" value="InterPro"/>
</dbReference>
<dbReference type="GO" id="GO:0020037">
    <property type="term" value="F:heme binding"/>
    <property type="evidence" value="ECO:0007669"/>
    <property type="project" value="InterPro"/>
</dbReference>
<dbReference type="GO" id="GO:0005506">
    <property type="term" value="F:iron ion binding"/>
    <property type="evidence" value="ECO:0007669"/>
    <property type="project" value="InterPro"/>
</dbReference>
<dbReference type="GO" id="GO:0015945">
    <property type="term" value="P:methanol metabolic process"/>
    <property type="evidence" value="ECO:0007669"/>
    <property type="project" value="UniProtKB-KW"/>
</dbReference>
<dbReference type="Gene3D" id="1.10.760.10">
    <property type="entry name" value="Cytochrome c-like domain"/>
    <property type="match status" value="1"/>
</dbReference>
<dbReference type="InterPro" id="IPR009056">
    <property type="entry name" value="Cyt_c-like_dom"/>
</dbReference>
<dbReference type="InterPro" id="IPR036909">
    <property type="entry name" value="Cyt_c-like_dom_sf"/>
</dbReference>
<dbReference type="InterPro" id="IPR009153">
    <property type="entry name" value="Cyt_cL"/>
</dbReference>
<dbReference type="NCBIfam" id="TIGR03872">
    <property type="entry name" value="cytochrome_MoxG"/>
    <property type="match status" value="1"/>
</dbReference>
<dbReference type="Pfam" id="PF13442">
    <property type="entry name" value="Cytochrome_CBB3"/>
    <property type="match status" value="1"/>
</dbReference>
<dbReference type="PIRSF" id="PIRSF000008">
    <property type="entry name" value="Cytochrome_c551i"/>
    <property type="match status" value="1"/>
</dbReference>
<dbReference type="SUPFAM" id="SSF46626">
    <property type="entry name" value="Cytochrome c"/>
    <property type="match status" value="1"/>
</dbReference>
<dbReference type="PROSITE" id="PS51007">
    <property type="entry name" value="CYTC"/>
    <property type="match status" value="1"/>
</dbReference>
<protein>
    <recommendedName>
        <fullName>Cytochrome c-L</fullName>
    </recommendedName>
</protein>
<evidence type="ECO:0000305" key="1"/>
<evidence type="ECO:0007829" key="2">
    <source>
        <dbReference type="PDB" id="2C8S"/>
    </source>
</evidence>
<organism>
    <name type="scientific">Methylorubrum extorquens (strain ATCC 14718 / DSM 1338 / JCM 2805 / NCIMB 9133 / AM1)</name>
    <name type="common">Methylobacterium extorquens</name>
    <dbReference type="NCBI Taxonomy" id="272630"/>
    <lineage>
        <taxon>Bacteria</taxon>
        <taxon>Pseudomonadati</taxon>
        <taxon>Pseudomonadota</taxon>
        <taxon>Alphaproteobacteria</taxon>
        <taxon>Hyphomicrobiales</taxon>
        <taxon>Methylobacteriaceae</taxon>
        <taxon>Methylorubrum</taxon>
    </lineage>
</organism>
<reference key="1">
    <citation type="journal article" date="1988" name="Nucleic Acids Res.">
        <title>The nucleotide sequence and deduced amino acid sequence of the genes for cytochrome cL and a hypothetical second subunit of the methanol dehydrogenase of Methylobacterium AM1.</title>
        <authorList>
            <person name="Nunn D.N."/>
            <person name="Anthony C."/>
        </authorList>
    </citation>
    <scope>NUCLEOTIDE SEQUENCE [GENOMIC DNA]</scope>
</reference>
<reference key="2">
    <citation type="journal article" date="1988" name="Biochem. J.">
        <title>The nucleotide sequence and deduced amino acid sequence of the cytochrome cL gene of Methylobacterium extorquens AM1, a novel class of c-type cytochrome.</title>
        <authorList>
            <person name="Nunn D.N."/>
            <person name="Anthony C."/>
        </authorList>
    </citation>
    <scope>NUCLEOTIDE SEQUENCE [GENOMIC DNA]</scope>
</reference>
<reference key="3">
    <citation type="journal article" date="2009" name="PLoS ONE">
        <title>Methylobacterium genome sequences: a reference blueprint to investigate microbial metabolism of C1 compounds from natural and industrial sources.</title>
        <authorList>
            <person name="Vuilleumier S."/>
            <person name="Chistoserdova L."/>
            <person name="Lee M.-C."/>
            <person name="Bringel F."/>
            <person name="Lajus A."/>
            <person name="Zhou Y."/>
            <person name="Gourion B."/>
            <person name="Barbe V."/>
            <person name="Chang J."/>
            <person name="Cruveiller S."/>
            <person name="Dossat C."/>
            <person name="Gillett W."/>
            <person name="Gruffaz C."/>
            <person name="Haugen E."/>
            <person name="Hourcade E."/>
            <person name="Levy R."/>
            <person name="Mangenot S."/>
            <person name="Muller E."/>
            <person name="Nadalig T."/>
            <person name="Pagni M."/>
            <person name="Penny C."/>
            <person name="Peyraud R."/>
            <person name="Robinson D.G."/>
            <person name="Roche D."/>
            <person name="Rouy Z."/>
            <person name="Saenampechek C."/>
            <person name="Salvignol G."/>
            <person name="Vallenet D."/>
            <person name="Wu Z."/>
            <person name="Marx C.J."/>
            <person name="Vorholt J.A."/>
            <person name="Olson M.V."/>
            <person name="Kaul R."/>
            <person name="Weissenbach J."/>
            <person name="Medigue C."/>
            <person name="Lidstrom M.E."/>
        </authorList>
    </citation>
    <scope>NUCLEOTIDE SEQUENCE [LARGE SCALE GENOMIC DNA]</scope>
    <source>
        <strain>ATCC 14718 / DSM 1338 / JCM 2805 / NCIMB 9133 / AM1</strain>
    </source>
</reference>
<reference key="4">
    <citation type="journal article" date="1990" name="Gene">
        <title>Nucleotide sequence of the Methylobacterium extorquens AM1 moxF and moxJ genes involved in methanol oxidation.</title>
        <authorList>
            <person name="Anderson D.J."/>
            <person name="Morris C.J."/>
            <person name="Nunn D.N."/>
            <person name="Anthony C."/>
            <person name="Lidstrom M.E."/>
        </authorList>
    </citation>
    <scope>NUCLEOTIDE SEQUENCE [GENOMIC DNA] OF 1-8</scope>
</reference>
<accession>P14774</accession>
<accession>C5AQA7</accession>
<name>CYCL_METEA</name>